<sequence>MTTTTADHNISAQQKAVEENLVNRVLQSFDACENPRLKQLMESLVVHLHDFIRDVRLTEDEWNYAIDFLTAVGHITDDKRQEFVLLSDTLGASMQTIAVNNEAYENSTEATVFGPFFLDDAPEVELGGDIAGGAQGQAAWIEGTVTDTEGNPVPNARIEVWECDEDGLYDVQYADERMAGRAYMHTDANGDYRFWGLTPVPYPIPHDGPVGNMLKAVGRSPVRCAHLHFMVTAPELRTLVTHIFVEGDPQLEIGDSVFGVKDSLIKKFEEQAPGTPTPDGRDLGDQTWARTRFDIVLAPGA</sequence>
<dbReference type="EC" id="1.13.11.37" evidence="2"/>
<dbReference type="EMBL" id="BA000036">
    <property type="protein sequence ID" value="BAC00450.1"/>
    <property type="molecule type" value="Genomic_DNA"/>
</dbReference>
<dbReference type="RefSeq" id="NP_602248.1">
    <property type="nucleotide sequence ID" value="NC_003450.3"/>
</dbReference>
<dbReference type="RefSeq" id="WP_011015596.1">
    <property type="nucleotide sequence ID" value="NC_006958.1"/>
</dbReference>
<dbReference type="SMR" id="Q8NL92"/>
<dbReference type="STRING" id="196627.cg3385"/>
<dbReference type="KEGG" id="cgb:cg3385"/>
<dbReference type="KEGG" id="cgl:Cgl3056"/>
<dbReference type="PATRIC" id="fig|196627.13.peg.2988"/>
<dbReference type="eggNOG" id="COG3485">
    <property type="taxonomic scope" value="Bacteria"/>
</dbReference>
<dbReference type="HOGENOM" id="CLU_046727_1_1_11"/>
<dbReference type="OrthoDB" id="9800887at2"/>
<dbReference type="BioCyc" id="CORYNE:G18NG-12677-MONOMER"/>
<dbReference type="BioCyc" id="MetaCyc:G18NG-12677-MONOMER"/>
<dbReference type="Proteomes" id="UP000000582">
    <property type="component" value="Chromosome"/>
</dbReference>
<dbReference type="GO" id="GO:0047074">
    <property type="term" value="F:4-hydroxycatechol 1,2-dioxygenase activity"/>
    <property type="evidence" value="ECO:0007669"/>
    <property type="project" value="UniProtKB-EC"/>
</dbReference>
<dbReference type="GO" id="GO:0018576">
    <property type="term" value="F:catechol 1,2-dioxygenase activity"/>
    <property type="evidence" value="ECO:0007669"/>
    <property type="project" value="InterPro"/>
</dbReference>
<dbReference type="GO" id="GO:0008199">
    <property type="term" value="F:ferric iron binding"/>
    <property type="evidence" value="ECO:0007669"/>
    <property type="project" value="InterPro"/>
</dbReference>
<dbReference type="GO" id="GO:0009712">
    <property type="term" value="P:catechol-containing compound metabolic process"/>
    <property type="evidence" value="ECO:0007669"/>
    <property type="project" value="InterPro"/>
</dbReference>
<dbReference type="Gene3D" id="2.60.130.10">
    <property type="entry name" value="Aromatic compound dioxygenase"/>
    <property type="match status" value="1"/>
</dbReference>
<dbReference type="InterPro" id="IPR007535">
    <property type="entry name" value="Catechol_dOase_N"/>
</dbReference>
<dbReference type="InterPro" id="IPR000627">
    <property type="entry name" value="Intradiol_dOase_C"/>
</dbReference>
<dbReference type="InterPro" id="IPR015889">
    <property type="entry name" value="Intradiol_dOase_core"/>
</dbReference>
<dbReference type="InterPro" id="IPR050770">
    <property type="entry name" value="Intradiol_RC_Dioxygenase"/>
</dbReference>
<dbReference type="PANTHER" id="PTHR33711">
    <property type="entry name" value="DIOXYGENASE, PUTATIVE (AFU_ORTHOLOGUE AFUA_2G02910)-RELATED"/>
    <property type="match status" value="1"/>
</dbReference>
<dbReference type="PANTHER" id="PTHR33711:SF7">
    <property type="entry name" value="INTRADIOL RING-CLEAVAGE DIOXYGENASES DOMAIN-CONTAINING PROTEIN-RELATED"/>
    <property type="match status" value="1"/>
</dbReference>
<dbReference type="Pfam" id="PF00775">
    <property type="entry name" value="Dioxygenase_C"/>
    <property type="match status" value="1"/>
</dbReference>
<dbReference type="Pfam" id="PF04444">
    <property type="entry name" value="Dioxygenase_N"/>
    <property type="match status" value="1"/>
</dbReference>
<dbReference type="SUPFAM" id="SSF49482">
    <property type="entry name" value="Aromatic compound dioxygenase"/>
    <property type="match status" value="1"/>
</dbReference>
<dbReference type="PROSITE" id="PS00083">
    <property type="entry name" value="INTRADIOL_DIOXYGENAS"/>
    <property type="match status" value="1"/>
</dbReference>
<accession>Q8NL92</accession>
<accession>Q6M1G2</accession>
<name>HXQD2_CORGL</name>
<reference key="1">
    <citation type="journal article" date="2003" name="Appl. Microbiol. Biotechnol.">
        <title>The Corynebacterium glutamicum genome: features and impacts on biotechnological processes.</title>
        <authorList>
            <person name="Ikeda M."/>
            <person name="Nakagawa S."/>
        </authorList>
    </citation>
    <scope>NUCLEOTIDE SEQUENCE [LARGE SCALE GENOMIC DNA]</scope>
    <source>
        <strain>ATCC 13032 / DSM 20300 / JCM 1318 / BCRC 11384 / CCUG 27702 / LMG 3730 / NBRC 12168 / NCIMB 10025 / NRRL B-2784 / 534</strain>
    </source>
</reference>
<reference key="2">
    <citation type="journal article" date="2005" name="Microbes Environ.">
        <title>Genomic analysis and identification of catabolic pathways for aromatic compounds in Corynebacterium glutamicum.</title>
        <authorList>
            <person name="Shen X.H."/>
            <person name="Huang Y."/>
            <person name="Liu S.J."/>
        </authorList>
    </citation>
    <scope>FUNCTION</scope>
    <scope>CATALYTIC ACTIVITY</scope>
</reference>
<evidence type="ECO:0000250" key="1">
    <source>
        <dbReference type="UniProtKB" id="Q5PXQ6"/>
    </source>
</evidence>
<evidence type="ECO:0000269" key="2">
    <source ref="2"/>
</evidence>
<evidence type="ECO:0000303" key="3">
    <source ref="2"/>
</evidence>
<evidence type="ECO:0000305" key="4"/>
<evidence type="ECO:0000312" key="5">
    <source>
        <dbReference type="EMBL" id="BAC00450.1"/>
    </source>
</evidence>
<keyword id="KW-0223">Dioxygenase</keyword>
<keyword id="KW-0408">Iron</keyword>
<keyword id="KW-0479">Metal-binding</keyword>
<keyword id="KW-0560">Oxidoreductase</keyword>
<keyword id="KW-1185">Reference proteome</keyword>
<protein>
    <recommendedName>
        <fullName evidence="3">Hydroxyquinol 1,2-dioxygenase</fullName>
        <ecNumber evidence="2">1.13.11.37</ecNumber>
    </recommendedName>
</protein>
<gene>
    <name evidence="5" type="ordered locus">Cgl3056</name>
</gene>
<organism>
    <name type="scientific">Corynebacterium glutamicum (strain ATCC 13032 / DSM 20300 / JCM 1318 / BCRC 11384 / CCUG 27702 / LMG 3730 / NBRC 12168 / NCIMB 10025 / NRRL B-2784 / 534)</name>
    <dbReference type="NCBI Taxonomy" id="196627"/>
    <lineage>
        <taxon>Bacteria</taxon>
        <taxon>Bacillati</taxon>
        <taxon>Actinomycetota</taxon>
        <taxon>Actinomycetes</taxon>
        <taxon>Mycobacteriales</taxon>
        <taxon>Corynebacteriaceae</taxon>
        <taxon>Corynebacterium</taxon>
    </lineage>
</organism>
<feature type="chain" id="PRO_0000454475" description="Hydroxyquinol 1,2-dioxygenase">
    <location>
        <begin position="1"/>
        <end position="301"/>
    </location>
</feature>
<feature type="binding site" evidence="1">
    <location>
        <position position="169"/>
    </location>
    <ligand>
        <name>Fe cation</name>
        <dbReference type="ChEBI" id="CHEBI:24875"/>
    </ligand>
</feature>
<feature type="binding site" evidence="1">
    <location>
        <position position="202"/>
    </location>
    <ligand>
        <name>Fe cation</name>
        <dbReference type="ChEBI" id="CHEBI:24875"/>
    </ligand>
</feature>
<feature type="binding site" evidence="1">
    <location>
        <position position="226"/>
    </location>
    <ligand>
        <name>Fe cation</name>
        <dbReference type="ChEBI" id="CHEBI:24875"/>
    </ligand>
</feature>
<feature type="binding site" evidence="1">
    <location>
        <position position="228"/>
    </location>
    <ligand>
        <name>Fe cation</name>
        <dbReference type="ChEBI" id="CHEBI:24875"/>
    </ligand>
</feature>
<comment type="function">
    <text evidence="2">Involved in resorcinol degradation (Ref.2). Catalyzes the conversion of hydroxyquinol to malelylacetate (Ref.2). Also shows weak activity with catechol, 3-methylcatechol and 4-methylcatechol, but cannot use 4-chlorocatechol, 4-nitrocatechol or protocatechuate (Ref.2).</text>
</comment>
<comment type="catalytic activity">
    <reaction evidence="2">
        <text>benzene-1,2,4-triol + O2 = maleylacetate + 2 H(+)</text>
        <dbReference type="Rhea" id="RHEA:35595"/>
        <dbReference type="ChEBI" id="CHEBI:15378"/>
        <dbReference type="ChEBI" id="CHEBI:15379"/>
        <dbReference type="ChEBI" id="CHEBI:16468"/>
        <dbReference type="ChEBI" id="CHEBI:16971"/>
        <dbReference type="EC" id="1.13.11.37"/>
    </reaction>
    <physiologicalReaction direction="left-to-right" evidence="2">
        <dbReference type="Rhea" id="RHEA:35596"/>
    </physiologicalReaction>
</comment>
<comment type="cofactor">
    <cofactor evidence="1">
        <name>Fe(3+)</name>
        <dbReference type="ChEBI" id="CHEBI:29034"/>
    </cofactor>
    <text evidence="1">Binds 1 Fe(3+) ion per subunit.</text>
</comment>
<comment type="pathway">
    <text evidence="4">Aromatic compound metabolism.</text>
</comment>
<comment type="similarity">
    <text evidence="4">Belongs to the intradiol ring-cleavage dioxygenase family.</text>
</comment>
<proteinExistence type="evidence at protein level"/>